<reference key="1">
    <citation type="journal article" date="2011" name="PLoS Genet.">
        <title>Genomic analysis of the necrotrophic fungal pathogens Sclerotinia sclerotiorum and Botrytis cinerea.</title>
        <authorList>
            <person name="Amselem J."/>
            <person name="Cuomo C.A."/>
            <person name="van Kan J.A.L."/>
            <person name="Viaud M."/>
            <person name="Benito E.P."/>
            <person name="Couloux A."/>
            <person name="Coutinho P.M."/>
            <person name="de Vries R.P."/>
            <person name="Dyer P.S."/>
            <person name="Fillinger S."/>
            <person name="Fournier E."/>
            <person name="Gout L."/>
            <person name="Hahn M."/>
            <person name="Kohn L."/>
            <person name="Lapalu N."/>
            <person name="Plummer K.M."/>
            <person name="Pradier J.-M."/>
            <person name="Quevillon E."/>
            <person name="Sharon A."/>
            <person name="Simon A."/>
            <person name="ten Have A."/>
            <person name="Tudzynski B."/>
            <person name="Tudzynski P."/>
            <person name="Wincker P."/>
            <person name="Andrew M."/>
            <person name="Anthouard V."/>
            <person name="Beever R.E."/>
            <person name="Beffa R."/>
            <person name="Benoit I."/>
            <person name="Bouzid O."/>
            <person name="Brault B."/>
            <person name="Chen Z."/>
            <person name="Choquer M."/>
            <person name="Collemare J."/>
            <person name="Cotton P."/>
            <person name="Danchin E.G."/>
            <person name="Da Silva C."/>
            <person name="Gautier A."/>
            <person name="Giraud C."/>
            <person name="Giraud T."/>
            <person name="Gonzalez C."/>
            <person name="Grossetete S."/>
            <person name="Gueldener U."/>
            <person name="Henrissat B."/>
            <person name="Howlett B.J."/>
            <person name="Kodira C."/>
            <person name="Kretschmer M."/>
            <person name="Lappartient A."/>
            <person name="Leroch M."/>
            <person name="Levis C."/>
            <person name="Mauceli E."/>
            <person name="Neuveglise C."/>
            <person name="Oeser B."/>
            <person name="Pearson M."/>
            <person name="Poulain J."/>
            <person name="Poussereau N."/>
            <person name="Quesneville H."/>
            <person name="Rascle C."/>
            <person name="Schumacher J."/>
            <person name="Segurens B."/>
            <person name="Sexton A."/>
            <person name="Silva E."/>
            <person name="Sirven C."/>
            <person name="Soanes D.M."/>
            <person name="Talbot N.J."/>
            <person name="Templeton M."/>
            <person name="Yandava C."/>
            <person name="Yarden O."/>
            <person name="Zeng Q."/>
            <person name="Rollins J.A."/>
            <person name="Lebrun M.-H."/>
            <person name="Dickman M."/>
        </authorList>
    </citation>
    <scope>NUCLEOTIDE SEQUENCE [LARGE SCALE GENOMIC DNA]</scope>
    <source>
        <strain>ATCC 18683 / 1980 / Ss-1</strain>
    </source>
</reference>
<name>CD123_SCLS1</name>
<gene>
    <name type="primary">CDC123</name>
    <name type="ORF">SS1G_08953</name>
</gene>
<proteinExistence type="inferred from homology"/>
<protein>
    <recommendedName>
        <fullName evidence="5">Translation initiation factor eIF2 assembly protein</fullName>
    </recommendedName>
    <alternativeName>
        <fullName>Cell division cycle protein 123</fullName>
    </alternativeName>
</protein>
<organism>
    <name type="scientific">Sclerotinia sclerotiorum (strain ATCC 18683 / 1980 / Ss-1)</name>
    <name type="common">White mold</name>
    <name type="synonym">Whetzelinia sclerotiorum</name>
    <dbReference type="NCBI Taxonomy" id="665079"/>
    <lineage>
        <taxon>Eukaryota</taxon>
        <taxon>Fungi</taxon>
        <taxon>Dikarya</taxon>
        <taxon>Ascomycota</taxon>
        <taxon>Pezizomycotina</taxon>
        <taxon>Leotiomycetes</taxon>
        <taxon>Helotiales</taxon>
        <taxon>Sclerotiniaceae</taxon>
        <taxon>Sclerotinia</taxon>
    </lineage>
</organism>
<keyword id="KW-0067">ATP-binding</keyword>
<keyword id="KW-0143">Chaperone</keyword>
<keyword id="KW-0963">Cytoplasm</keyword>
<keyword id="KW-0460">Magnesium</keyword>
<keyword id="KW-0479">Metal-binding</keyword>
<keyword id="KW-0547">Nucleotide-binding</keyword>
<keyword id="KW-1185">Reference proteome</keyword>
<feature type="chain" id="PRO_0000350949" description="Translation initiation factor eIF2 assembly protein">
    <location>
        <begin position="1"/>
        <end position="407"/>
    </location>
</feature>
<feature type="region of interest" description="Disordered" evidence="4">
    <location>
        <begin position="73"/>
        <end position="101"/>
    </location>
</feature>
<feature type="compositionally biased region" description="Acidic residues" evidence="4">
    <location>
        <begin position="90"/>
        <end position="100"/>
    </location>
</feature>
<feature type="binding site" evidence="1">
    <location>
        <position position="126"/>
    </location>
    <ligand>
        <name>ATP</name>
        <dbReference type="ChEBI" id="CHEBI:30616"/>
    </ligand>
</feature>
<feature type="binding site" evidence="1">
    <location>
        <position position="129"/>
    </location>
    <ligand>
        <name>ATP</name>
        <dbReference type="ChEBI" id="CHEBI:30616"/>
    </ligand>
</feature>
<feature type="binding site" evidence="1">
    <location>
        <position position="131"/>
    </location>
    <ligand>
        <name>ATP</name>
        <dbReference type="ChEBI" id="CHEBI:30616"/>
    </ligand>
</feature>
<feature type="binding site" evidence="3">
    <location>
        <position position="133"/>
    </location>
    <ligand>
        <name>ATP</name>
        <dbReference type="ChEBI" id="CHEBI:30616"/>
    </ligand>
</feature>
<feature type="binding site" evidence="3">
    <location>
        <position position="192"/>
    </location>
    <ligand>
        <name>ATP</name>
        <dbReference type="ChEBI" id="CHEBI:30616"/>
    </ligand>
</feature>
<feature type="binding site" evidence="1">
    <location>
        <position position="193"/>
    </location>
    <ligand>
        <name>ATP</name>
        <dbReference type="ChEBI" id="CHEBI:30616"/>
    </ligand>
</feature>
<feature type="binding site" evidence="3">
    <location>
        <position position="194"/>
    </location>
    <ligand>
        <name>ATP</name>
        <dbReference type="ChEBI" id="CHEBI:30616"/>
    </ligand>
</feature>
<feature type="binding site" evidence="3">
    <location>
        <position position="195"/>
    </location>
    <ligand>
        <name>ATP</name>
        <dbReference type="ChEBI" id="CHEBI:30616"/>
    </ligand>
</feature>
<feature type="binding site" evidence="1">
    <location>
        <position position="202"/>
    </location>
    <ligand>
        <name>ATP</name>
        <dbReference type="ChEBI" id="CHEBI:30616"/>
    </ligand>
</feature>
<feature type="binding site" evidence="1">
    <location>
        <position position="204"/>
    </location>
    <ligand>
        <name>ATP</name>
        <dbReference type="ChEBI" id="CHEBI:30616"/>
    </ligand>
</feature>
<feature type="binding site" evidence="1">
    <location>
        <position position="218"/>
    </location>
    <ligand>
        <name>ATP</name>
        <dbReference type="ChEBI" id="CHEBI:30616"/>
    </ligand>
</feature>
<feature type="binding site" evidence="3">
    <location>
        <position position="257"/>
    </location>
    <ligand>
        <name>ATP</name>
        <dbReference type="ChEBI" id="CHEBI:30616"/>
    </ligand>
</feature>
<feature type="binding site" evidence="1">
    <location>
        <position position="271"/>
    </location>
    <ligand>
        <name>ATP</name>
        <dbReference type="ChEBI" id="CHEBI:30616"/>
    </ligand>
</feature>
<feature type="binding site" evidence="1">
    <location>
        <position position="271"/>
    </location>
    <ligand>
        <name>Mg(2+)</name>
        <dbReference type="ChEBI" id="CHEBI:18420"/>
    </ligand>
</feature>
<feature type="binding site" evidence="1">
    <location>
        <position position="273"/>
    </location>
    <ligand>
        <name>ATP</name>
        <dbReference type="ChEBI" id="CHEBI:30616"/>
    </ligand>
</feature>
<feature type="binding site" evidence="1">
    <location>
        <position position="273"/>
    </location>
    <ligand>
        <name>Mg(2+)</name>
        <dbReference type="ChEBI" id="CHEBI:18420"/>
    </ligand>
</feature>
<dbReference type="EMBL" id="CH476632">
    <property type="protein sequence ID" value="EDN93088.1"/>
    <property type="molecule type" value="Genomic_DNA"/>
</dbReference>
<dbReference type="RefSeq" id="XP_001590189.1">
    <property type="nucleotide sequence ID" value="XM_001590139.1"/>
</dbReference>
<dbReference type="SMR" id="A7EUE6"/>
<dbReference type="FunCoup" id="A7EUE6">
    <property type="interactions" value="698"/>
</dbReference>
<dbReference type="STRING" id="665079.A7EUE6"/>
<dbReference type="GeneID" id="5486468"/>
<dbReference type="KEGG" id="ssl:SS1G_08953"/>
<dbReference type="VEuPathDB" id="FungiDB:sscle_14g100840"/>
<dbReference type="InParanoid" id="A7EUE6"/>
<dbReference type="OMA" id="TFPDPNF"/>
<dbReference type="OrthoDB" id="360540at2759"/>
<dbReference type="Proteomes" id="UP000001312">
    <property type="component" value="Unassembled WGS sequence"/>
</dbReference>
<dbReference type="GO" id="GO:0005737">
    <property type="term" value="C:cytoplasm"/>
    <property type="evidence" value="ECO:0000250"/>
    <property type="project" value="UniProtKB"/>
</dbReference>
<dbReference type="GO" id="GO:0005524">
    <property type="term" value="F:ATP binding"/>
    <property type="evidence" value="ECO:0000250"/>
    <property type="project" value="UniProtKB"/>
</dbReference>
<dbReference type="GO" id="GO:0000287">
    <property type="term" value="F:magnesium ion binding"/>
    <property type="evidence" value="ECO:0000250"/>
    <property type="project" value="UniProtKB"/>
</dbReference>
<dbReference type="GO" id="GO:0044183">
    <property type="term" value="F:protein folding chaperone"/>
    <property type="evidence" value="ECO:0000250"/>
    <property type="project" value="UniProtKB"/>
</dbReference>
<dbReference type="GO" id="GO:1905143">
    <property type="term" value="P:eukaryotic translation initiation factor 2 complex assembly"/>
    <property type="evidence" value="ECO:0000250"/>
    <property type="project" value="UniProtKB"/>
</dbReference>
<dbReference type="InterPro" id="IPR009772">
    <property type="entry name" value="CDC123"/>
</dbReference>
<dbReference type="PANTHER" id="PTHR15323:SF6">
    <property type="entry name" value="CELL DIVISION CYCLE PROTEIN 123 HOMOLOG"/>
    <property type="match status" value="1"/>
</dbReference>
<dbReference type="PANTHER" id="PTHR15323">
    <property type="entry name" value="D123 PROTEIN"/>
    <property type="match status" value="1"/>
</dbReference>
<dbReference type="Pfam" id="PF07065">
    <property type="entry name" value="D123"/>
    <property type="match status" value="1"/>
</dbReference>
<evidence type="ECO:0000250" key="1">
    <source>
        <dbReference type="UniProtKB" id="O75794"/>
    </source>
</evidence>
<evidence type="ECO:0000250" key="2">
    <source>
        <dbReference type="UniProtKB" id="Q05791"/>
    </source>
</evidence>
<evidence type="ECO:0000250" key="3">
    <source>
        <dbReference type="UniProtKB" id="Q9P7N5"/>
    </source>
</evidence>
<evidence type="ECO:0000256" key="4">
    <source>
        <dbReference type="SAM" id="MobiDB-lite"/>
    </source>
</evidence>
<evidence type="ECO:0000305" key="5"/>
<sequence length="407" mass="46427">MPAPDIPEVARTETEPLTRLPFEPITKSHILNCSYDKWHAEYRSSTLKSRIIPLTPEFLSYLREDGIVLPSEIATFPPPETYNNNSTSDGWDEDTDTESDPSEKFSEIHKQIQETITELGGSVVPKLNWSAPKDATWISLKQNSMECNTANDVYLLLKSSDFITHDLEHAFDGCAEDPSLTKENIQYVLVLRKWFKVNPSCEFRCFVRDRRIIGICQRDLNYFDFLFPLIPTLREAIQEYFDRTLKDSFPDRNFSFDVYIPEPFDKVRLVDINPWAPRTDPLLFSWLELLTLSVPPPLLGVADSSSVPPLPVQSSDEDDGADDVEELGWMPEFRLIKKDDPEAYSFSSPQYSAHKMPQEVVEAGASGEGGMREFADNWQRMLSGELEMMRAGEDSSDDEDEVEAIVT</sequence>
<accession>A7EUE6</accession>
<comment type="function">
    <text evidence="2">ATP-dependent protein-folding chaperone for the eIF2 complex. Binds to the gamma subunit of the eIF2 complex which allows the subunit to assemble with the alpha and beta subunits.</text>
</comment>
<comment type="subcellular location">
    <subcellularLocation>
        <location evidence="2">Cytoplasm</location>
    </subcellularLocation>
</comment>
<comment type="similarity">
    <text evidence="5">Belongs to the CDC123 family.</text>
</comment>